<comment type="subcellular location">
    <subcellularLocation>
        <location evidence="1">Cell membrane</location>
        <topology evidence="1">Lipid-anchor</topology>
    </subcellularLocation>
</comment>
<comment type="similarity">
    <text evidence="2">Belongs to the staphylococcal tandem lipoprotein family.</text>
</comment>
<organism>
    <name type="scientific">Staphylococcus aureus (strain COL)</name>
    <dbReference type="NCBI Taxonomy" id="93062"/>
    <lineage>
        <taxon>Bacteria</taxon>
        <taxon>Bacillati</taxon>
        <taxon>Bacillota</taxon>
        <taxon>Bacilli</taxon>
        <taxon>Bacillales</taxon>
        <taxon>Staphylococcaceae</taxon>
        <taxon>Staphylococcus</taxon>
    </lineage>
</organism>
<sequence>MIKRVNKLVLGISLLFLVISITAGCGMGKEAEIKKSFEKTLSMYPIKNLEDLYDKEGYRDDQFDKNDKGTWIVNSQMAIQNKGEALKIKGMLLKIDRNTRSAKGFYYTNEIKTEKYEVAQDNQKKYPVKMINNKFISTEEVKEENIKKEIENFKFFAQYSNFKDLMNYKDGDISYNPEVPSYSAQYQLTNDDYNVKQLRKRYDIPTNKAPKLLLKGTGNLKGSSVGYKKIEFTFLENKNENIYFTDSLHLEPSEDK</sequence>
<proteinExistence type="inferred from homology"/>
<accession>Q5HJS2</accession>
<feature type="signal peptide" evidence="1">
    <location>
        <begin position="1"/>
        <end position="24"/>
    </location>
</feature>
<feature type="chain" id="PRO_0000282102" description="Uncharacterized lipoprotein SACOL0080">
    <location>
        <begin position="25"/>
        <end position="256"/>
    </location>
</feature>
<feature type="lipid moiety-binding region" description="N-palmitoyl cysteine" evidence="1">
    <location>
        <position position="25"/>
    </location>
</feature>
<feature type="lipid moiety-binding region" description="S-diacylglycerol cysteine" evidence="1">
    <location>
        <position position="25"/>
    </location>
</feature>
<protein>
    <recommendedName>
        <fullName>Uncharacterized lipoprotein SACOL0080</fullName>
    </recommendedName>
</protein>
<evidence type="ECO:0000255" key="1">
    <source>
        <dbReference type="PROSITE-ProRule" id="PRU00303"/>
    </source>
</evidence>
<evidence type="ECO:0000305" key="2"/>
<reference key="1">
    <citation type="journal article" date="2005" name="J. Bacteriol.">
        <title>Insights on evolution of virulence and resistance from the complete genome analysis of an early methicillin-resistant Staphylococcus aureus strain and a biofilm-producing methicillin-resistant Staphylococcus epidermidis strain.</title>
        <authorList>
            <person name="Gill S.R."/>
            <person name="Fouts D.E."/>
            <person name="Archer G.L."/>
            <person name="Mongodin E.F."/>
            <person name="DeBoy R.T."/>
            <person name="Ravel J."/>
            <person name="Paulsen I.T."/>
            <person name="Kolonay J.F."/>
            <person name="Brinkac L.M."/>
            <person name="Beanan M.J."/>
            <person name="Dodson R.J."/>
            <person name="Daugherty S.C."/>
            <person name="Madupu R."/>
            <person name="Angiuoli S.V."/>
            <person name="Durkin A.S."/>
            <person name="Haft D.H."/>
            <person name="Vamathevan J.J."/>
            <person name="Khouri H."/>
            <person name="Utterback T.R."/>
            <person name="Lee C."/>
            <person name="Dimitrov G."/>
            <person name="Jiang L."/>
            <person name="Qin H."/>
            <person name="Weidman J."/>
            <person name="Tran K."/>
            <person name="Kang K.H."/>
            <person name="Hance I.R."/>
            <person name="Nelson K.E."/>
            <person name="Fraser C.M."/>
        </authorList>
    </citation>
    <scope>NUCLEOTIDE SEQUENCE [LARGE SCALE GENOMIC DNA]</scope>
    <source>
        <strain>COL</strain>
    </source>
</reference>
<dbReference type="EMBL" id="CP000046">
    <property type="protein sequence ID" value="AAW38724.1"/>
    <property type="molecule type" value="Genomic_DNA"/>
</dbReference>
<dbReference type="RefSeq" id="WP_000597212.1">
    <property type="nucleotide sequence ID" value="NZ_JBGOFO010000001.1"/>
</dbReference>
<dbReference type="SMR" id="Q5HJS2"/>
<dbReference type="KEGG" id="sac:SACOL0080"/>
<dbReference type="HOGENOM" id="CLU_071589_0_1_9"/>
<dbReference type="Proteomes" id="UP000000530">
    <property type="component" value="Chromosome"/>
</dbReference>
<dbReference type="GO" id="GO:0005886">
    <property type="term" value="C:plasma membrane"/>
    <property type="evidence" value="ECO:0007669"/>
    <property type="project" value="UniProtKB-SubCell"/>
</dbReference>
<dbReference type="Gene3D" id="2.50.20.40">
    <property type="match status" value="1"/>
</dbReference>
<dbReference type="InterPro" id="IPR007595">
    <property type="entry name" value="Csa"/>
</dbReference>
<dbReference type="InterPro" id="IPR038641">
    <property type="entry name" value="Csa_sf"/>
</dbReference>
<dbReference type="NCBIfam" id="TIGR01742">
    <property type="entry name" value="SA_tandem_lipo"/>
    <property type="match status" value="1"/>
</dbReference>
<dbReference type="Pfam" id="PF04507">
    <property type="entry name" value="DUF576"/>
    <property type="match status" value="1"/>
</dbReference>
<dbReference type="PROSITE" id="PS51257">
    <property type="entry name" value="PROKAR_LIPOPROTEIN"/>
    <property type="match status" value="1"/>
</dbReference>
<gene>
    <name type="ordered locus">SACOL0080</name>
</gene>
<keyword id="KW-1003">Cell membrane</keyword>
<keyword id="KW-0449">Lipoprotein</keyword>
<keyword id="KW-0472">Membrane</keyword>
<keyword id="KW-0564">Palmitate</keyword>
<keyword id="KW-0732">Signal</keyword>
<name>Y080_STAAC</name>